<protein>
    <recommendedName>
        <fullName evidence="3">Glutamate receptor ionotropic, NMDA 1</fullName>
        <shortName>GluN1</shortName>
    </recommendedName>
    <alternativeName>
        <fullName evidence="15">N-methyl-D-aspartate receptor subunit NR1</fullName>
        <shortName>NMD-R1</shortName>
    </alternativeName>
</protein>
<comment type="function">
    <text evidence="1 3 6 7 8 9 10 12 13 14">Component of N-methyl-D-aspartate (NMDA) receptors (NMDARs) that function as heterotetrameric, ligand-gated cation channels with high calcium permeability and voltage-dependent block by Mg(2+) (PubMed:16214956, PubMed:19524674). NMDARs participate in synaptic plasticity (By similarity). Channel activation requires binding of the neurotransmitter L-glutamate to the GluN2 subunit, glycine binding to the GluN1 subunit, plus membrane depolarization to eliminate channel inhibition by Mg(2+) (PubMed:16214956, PubMed:19524674, PubMed:21677647, PubMed:25008524, PubMed:26912815, PubMed:27135925, PubMed:27916457, PubMed:28232581). NMDARs mediate simultaneously the potasium efflux and the influx of calcium and sodium (By similarity). Each GluN2 or GluN3 subunit confers differential attributes to channel properties, including activation, deactivation and desensitization kinetics, pH sensitivity, Ca2(+) permeability, and binding to allosteric modulators (By similarity).</text>
</comment>
<comment type="catalytic activity">
    <reaction evidence="6 7">
        <text>Ca(2+)(in) = Ca(2+)(out)</text>
        <dbReference type="Rhea" id="RHEA:29671"/>
        <dbReference type="ChEBI" id="CHEBI:29108"/>
    </reaction>
</comment>
<comment type="catalytic activity">
    <reaction evidence="3">
        <text>Na(+)(in) = Na(+)(out)</text>
        <dbReference type="Rhea" id="RHEA:34963"/>
        <dbReference type="ChEBI" id="CHEBI:29101"/>
    </reaction>
</comment>
<comment type="catalytic activity">
    <reaction evidence="1">
        <text>K(+)(in) = K(+)(out)</text>
        <dbReference type="Rhea" id="RHEA:29463"/>
        <dbReference type="ChEBI" id="CHEBI:29103"/>
    </reaction>
</comment>
<comment type="activity regulation">
    <text evidence="7 13">NMDA glutamate receptor activity is modulated by zinc ions (PubMed:19524674, PubMed:27916457). The NMDA glutamate receptor activity of the heterotetramer with grin2b is stimulated by micromolar levels of Zn(2+) (PubMed:19524674). The NMDA glutamate receptor activity of the heterotetramer with grin2a is inhibited by nanomolar levels of Zn(2+) (PubMed:27916457).</text>
</comment>
<comment type="subunit">
    <text evidence="2 3 6 7 8 9 10 11 12 13 14">Heterotetramer; the NMDAR subunits are modular and harbor tiered domains that function in concert to regulate opening and closing of the cation-selective ion channel pore (PubMed:27062927). Forms heterotetrameric channels composed of two GluN1/zeta subunits (GRIN1), and two identical GluN2/epsilon subunits (GRIN2A, GRIN2B, GRIN2C or GRIN2D) or GluN3 subunits (GRIN3A or GRIN3B) (in vitro) (PubMed:16214956, PubMed:19524674, PubMed:21677647, PubMed:25008524, PubMed:26912815, PubMed:27062927, PubMed:27135925, PubMed:27916457, PubMed:28232581). Does not form functional channels by itself (PubMed:16214956). Can also form heterotetrameric channels that contain at least two GluN1 subunits and at least two different GluN2 subunits (or a combination of one GluN2 and one GluN3 subunits) (in vitro) (By similarity). In vivo, the subunit composition may vary in function of the expression levels of the different subunits (By similarity).</text>
</comment>
<comment type="interaction">
    <interactant intactId="EBI-15932423">
        <id>A0A1L8F5J9</id>
    </interactant>
    <interactant intactId="EBI-16113306">
        <id>A7XY94</id>
        <label>grin2b</label>
    </interactant>
    <organismsDiffer>false</organismsDiffer>
    <experiments>3</experiments>
</comment>
<comment type="interaction">
    <interactant intactId="EBI-16582829">
        <id>A0A1L8F5J9-8</id>
    </interactant>
    <interactant intactId="EBI-396905">
        <id>Q00960</id>
        <label>Grin2b</label>
    </interactant>
    <organismsDiffer>true</organismsDiffer>
    <experiments>6</experiments>
</comment>
<comment type="subcellular location">
    <subcellularLocation>
        <location evidence="7 8 9 10 12 13 14">Cell membrane</location>
        <topology evidence="9 11 14">Multi-pass membrane protein</topology>
    </subcellularLocation>
    <subcellularLocation>
        <location evidence="1">Postsynaptic cell membrane</location>
    </subcellularLocation>
    <subcellularLocation>
        <location evidence="2">Postsynaptic density membrane</location>
    </subcellularLocation>
    <subcellularLocation>
        <location evidence="1">Synaptic cell membrane</location>
    </subcellularLocation>
    <text evidence="1 2">Synaptic cell membrane targeting is dependent of GRIN2B/GluN2B subunit (By similarity). Association with GRIN3A occurs in the endoplasmic reticulum (By similarity).</text>
</comment>
<comment type="alternative products">
    <event type="alternative splicing"/>
    <isoform>
        <id>A0A1L8F5J9-1</id>
        <name>1</name>
        <sequence type="displayed"/>
    </isoform>
    <isoform>
        <id>A0A1L8F5J9-2</id>
        <name>2</name>
        <sequence type="described" ref="VSP_059211"/>
    </isoform>
    <isoform>
        <id>A0A1L8F5J9-3</id>
        <name>3</name>
        <sequence type="described" ref="VSP_059207 VSP_059211"/>
    </isoform>
    <isoform>
        <id>A0A1L8F5J9-4</id>
        <name>4</name>
        <sequence type="described" ref="VSP_059209 VSP_059210"/>
    </isoform>
    <isoform>
        <id>A0A1L8F5J9-5</id>
        <name>5</name>
        <sequence type="described" ref="VSP_059207 VSP_059209 VSP_059210"/>
    </isoform>
    <isoform>
        <id>A0A1L8F5J9-6</id>
        <name>6</name>
        <sequence type="described" ref="VSP_059207 VSP_059208"/>
    </isoform>
    <isoform>
        <id>A0A1L8F5J9-7</id>
        <name>7</name>
        <sequence type="described" ref="VSP_059208"/>
    </isoform>
    <isoform>
        <id>A0A1L8F5J9-8</id>
        <name>8</name>
        <sequence type="described" ref="VSP_059206 VSP_059208"/>
    </isoform>
</comment>
<comment type="domain">
    <text evidence="17 18">A hydrophobic region that gives rise to the prediction of a transmembrane span does not cross the membrane, but is part of a discontinuously helical region that dips into the membrane and is probably part of the pore and of the selectivity filter.</text>
</comment>
<comment type="domain">
    <text evidence="8 11 12">The extracellular N-terminal domain (NTD) is a site of allosteric regulation to modulate overall receptor function.</text>
</comment>
<comment type="domain">
    <text evidence="9 11">The ligand-binding domain (LBD) bind to glycine (GluN1 and GluN3 subunits) and glutamate (GluN2 subunits) and control opening of the channel gate.</text>
</comment>
<comment type="domain">
    <text evidence="12">The transmembrane domain (TMD) harbors the channel gate and pore.</text>
</comment>
<comment type="similarity">
    <text evidence="16">Belongs to the glutamate-gated ion channel (TC 1.A.10.1) family. NR1/GRIN1 subfamily.</text>
</comment>
<evidence type="ECO:0000250" key="1">
    <source>
        <dbReference type="UniProtKB" id="P35438"/>
    </source>
</evidence>
<evidence type="ECO:0000250" key="2">
    <source>
        <dbReference type="UniProtKB" id="P35439"/>
    </source>
</evidence>
<evidence type="ECO:0000250" key="3">
    <source>
        <dbReference type="UniProtKB" id="Q05586"/>
    </source>
</evidence>
<evidence type="ECO:0000255" key="4"/>
<evidence type="ECO:0000255" key="5">
    <source>
        <dbReference type="PROSITE-ProRule" id="PRU00498"/>
    </source>
</evidence>
<evidence type="ECO:0000269" key="6">
    <source>
    </source>
</evidence>
<evidence type="ECO:0000269" key="7">
    <source>
    </source>
</evidence>
<evidence type="ECO:0000269" key="8">
    <source>
    </source>
</evidence>
<evidence type="ECO:0000269" key="9">
    <source>
    </source>
</evidence>
<evidence type="ECO:0000269" key="10">
    <source>
    </source>
</evidence>
<evidence type="ECO:0000269" key="11">
    <source>
    </source>
</evidence>
<evidence type="ECO:0000269" key="12">
    <source>
    </source>
</evidence>
<evidence type="ECO:0000269" key="13">
    <source>
    </source>
</evidence>
<evidence type="ECO:0000269" key="14">
    <source>
    </source>
</evidence>
<evidence type="ECO:0000303" key="15">
    <source>
    </source>
</evidence>
<evidence type="ECO:0000305" key="16"/>
<evidence type="ECO:0000305" key="17">
    <source>
    </source>
</evidence>
<evidence type="ECO:0000305" key="18">
    <source>
    </source>
</evidence>
<evidence type="ECO:0000312" key="19">
    <source>
        <dbReference type="EMBL" id="AAY63890.1"/>
    </source>
</evidence>
<evidence type="ECO:0000312" key="20">
    <source>
        <dbReference type="EMBL" id="ACN87989.1"/>
    </source>
</evidence>
<evidence type="ECO:0000312" key="21">
    <source>
        <dbReference type="EMBL" id="CAA63825.1"/>
    </source>
</evidence>
<evidence type="ECO:0000312" key="22">
    <source>
        <dbReference type="EMBL" id="CAA63871.1"/>
    </source>
</evidence>
<evidence type="ECO:0000312" key="23">
    <source>
        <dbReference type="Proteomes" id="UP000186698"/>
    </source>
</evidence>
<evidence type="ECO:0000312" key="24">
    <source>
        <dbReference type="Xenbase" id="XB-GENE-866327"/>
    </source>
</evidence>
<evidence type="ECO:0007744" key="25">
    <source>
        <dbReference type="PDB" id="3QEK"/>
    </source>
</evidence>
<evidence type="ECO:0007744" key="26">
    <source>
        <dbReference type="PDB" id="3QEL"/>
    </source>
</evidence>
<evidence type="ECO:0007744" key="27">
    <source>
        <dbReference type="PDB" id="3QEM"/>
    </source>
</evidence>
<evidence type="ECO:0007744" key="28">
    <source>
        <dbReference type="PDB" id="4TLL"/>
    </source>
</evidence>
<evidence type="ECO:0007744" key="29">
    <source>
        <dbReference type="PDB" id="4TLM"/>
    </source>
</evidence>
<evidence type="ECO:0007744" key="30">
    <source>
        <dbReference type="PDB" id="5B3J"/>
    </source>
</evidence>
<evidence type="ECO:0007744" key="31">
    <source>
        <dbReference type="PDB" id="5EWJ"/>
    </source>
</evidence>
<evidence type="ECO:0007744" key="32">
    <source>
        <dbReference type="PDB" id="5EWL"/>
    </source>
</evidence>
<evidence type="ECO:0007744" key="33">
    <source>
        <dbReference type="PDB" id="5EWM"/>
    </source>
</evidence>
<evidence type="ECO:0007744" key="34">
    <source>
        <dbReference type="PDB" id="5IOU"/>
    </source>
</evidence>
<evidence type="ECO:0007744" key="35">
    <source>
        <dbReference type="PDB" id="5IOV"/>
    </source>
</evidence>
<evidence type="ECO:0007744" key="36">
    <source>
        <dbReference type="PDB" id="5IPQ"/>
    </source>
</evidence>
<evidence type="ECO:0007744" key="37">
    <source>
        <dbReference type="PDB" id="5IPR"/>
    </source>
</evidence>
<evidence type="ECO:0007744" key="38">
    <source>
        <dbReference type="PDB" id="5IPS"/>
    </source>
</evidence>
<evidence type="ECO:0007744" key="39">
    <source>
        <dbReference type="PDB" id="5IPT"/>
    </source>
</evidence>
<evidence type="ECO:0007744" key="40">
    <source>
        <dbReference type="PDB" id="5IPU"/>
    </source>
</evidence>
<evidence type="ECO:0007744" key="41">
    <source>
        <dbReference type="PDB" id="5IPV"/>
    </source>
</evidence>
<evidence type="ECO:0007744" key="42">
    <source>
        <dbReference type="PDB" id="5TPW"/>
    </source>
</evidence>
<evidence type="ECO:0007744" key="43">
    <source>
        <dbReference type="PDB" id="5TPZ"/>
    </source>
</evidence>
<evidence type="ECO:0007744" key="44">
    <source>
        <dbReference type="PDB" id="5TQ0"/>
    </source>
</evidence>
<evidence type="ECO:0007744" key="45">
    <source>
        <dbReference type="PDB" id="5TQ2"/>
    </source>
</evidence>
<evidence type="ECO:0007744" key="46">
    <source>
        <dbReference type="PDB" id="5UOW"/>
    </source>
</evidence>
<evidence type="ECO:0007744" key="47">
    <source>
        <dbReference type="PDB" id="5UP2"/>
    </source>
</evidence>
<evidence type="ECO:0007829" key="48">
    <source>
        <dbReference type="PDB" id="3QEK"/>
    </source>
</evidence>
<evidence type="ECO:0007829" key="49">
    <source>
        <dbReference type="PDB" id="5TQ0"/>
    </source>
</evidence>
<evidence type="ECO:0007829" key="50">
    <source>
        <dbReference type="PDB" id="5TQ2"/>
    </source>
</evidence>
<evidence type="ECO:0007829" key="51">
    <source>
        <dbReference type="PDB" id="6E7R"/>
    </source>
</evidence>
<evidence type="ECO:0007829" key="52">
    <source>
        <dbReference type="PDB" id="6E7U"/>
    </source>
</evidence>
<organism evidence="23">
    <name type="scientific">Xenopus laevis</name>
    <name type="common">African clawed frog</name>
    <dbReference type="NCBI Taxonomy" id="8355"/>
    <lineage>
        <taxon>Eukaryota</taxon>
        <taxon>Metazoa</taxon>
        <taxon>Chordata</taxon>
        <taxon>Craniata</taxon>
        <taxon>Vertebrata</taxon>
        <taxon>Euteleostomi</taxon>
        <taxon>Amphibia</taxon>
        <taxon>Batrachia</taxon>
        <taxon>Anura</taxon>
        <taxon>Pipoidea</taxon>
        <taxon>Pipidae</taxon>
        <taxon>Xenopodinae</taxon>
        <taxon>Xenopus</taxon>
        <taxon>Xenopus</taxon>
    </lineage>
</organism>
<accession>A0A1L8F5J9</accession>
<accession>C0KD15</accession>
<accession>C0KD16</accession>
<accession>C0KD17</accession>
<accession>C0KD18</accession>
<accession>C0KD19</accession>
<accession>Q4PLR7</accession>
<accession>Q91805</accession>
<accession>Q91977</accession>
<sequence length="903" mass="101793">MGTMRLFLLAVLFLFSFARAGCDPKIVNIGAVLSTKKHEQIFREAVNQANKRHFTRKIQLNATSVTHRPNAIQMALSVCEDLISSQVYAILVSHPPAPTDHLTPTPISYTAGFYRIPVIGLTTRMSIYSDKSIHLSFLRTVPPYSHQALVWFEMMRLFNWNHVILIVSDDHEGRAAQKKLETLLEEKESKADKVLQFEPGTKNLTALLLEAKELEARVIILSASEDDATAVYKSAAMLDMTGAGYVWLVGEREISGSALRYAPDGIIGLQLINGKNESAHISDAVAVVAQAIHELFEMENITDPPRGCVGNTNIWKTGPLFKRVLMSSKYPDGVTGRIEFNEDGDRKFANYSIMNLQNRKLVQVGIFNGSYIIQNDRKIIWPGGETERPQGYQMSTRLKIVTIHQEPFVYVRPTTSDGTCREEYTINGDPIKKVICNGPNETIPGRPTVPQCCYGFCVDLLIKLAREMNFTYEVHLVADGKFGTQERVNNSNKKEWNGMMGELLSGQADMIVAPLTINNERAQYIEFSKPFKYQGLTILVKKEIPRSTLDSFMQPFQSTLWLLVGLSVHVVAVMLYLLDRFSPFGRFKVNSEEEEEDALTLSSAMWFSWGVLLNSGIGEGAPRSFSARILGMVWAGFAMIIVASYTANLAAFLVLDRPEERITGINDPRLRNPSDKFIYATVKQSSVDIYFRRQVELSTMYRHMEKHNYESAAEAIQAVRDNKLHAFIWDSAVLEFEASQKCDLVTTGELFFRSGFGIGMRKDSPWKQNVSLNILKSHENGFMEELDKTWVRYQECDSRSNAPATLTFENMAGVFMLVAGGIVAGIFLIFIEIAYKRHKDARRKQMQLAFAAVNVWRKNLQDRKSGRAEPDPKKKASFRSITSTLASSFKRRRSSKDTVNVVV</sequence>
<name>NMDZ1_XENLA</name>
<reference evidence="21" key="1">
    <citation type="journal article" date="1996" name="Bioorg. Khim.">
        <title>A new type of ionotropic glutamate receptors.</title>
        <authorList>
            <person name="Soloviev M.M."/>
            <person name="Ishimaru H."/>
            <person name="Barnard E.A."/>
        </authorList>
    </citation>
    <scope>NUCLEOTIDE SEQUENCE [MRNA] (ISOFORM 8)</scope>
    <scope>SUBCELLULAR LOCATION</scope>
    <source>
        <tissue evidence="21">Brain</tissue>
    </source>
</reference>
<reference evidence="22" key="2">
    <citation type="journal article" date="1996" name="J. Biol. Chem.">
        <title>Functional expression of a recombinant unitary glutamate receptor from Xenopus, which contains N-methyl-D-aspartate (NMDA) and non-NMDA receptor subunits.</title>
        <authorList>
            <person name="Soloviev M.M."/>
            <person name="Brierley M.J."/>
            <person name="Shao Z.Y."/>
            <person name="Mellor I.R."/>
            <person name="Volkova T.M."/>
            <person name="Kamboj R."/>
            <person name="Ishimaru H."/>
            <person name="Sudan H."/>
            <person name="Harris J."/>
            <person name="Foldes R.L."/>
            <person name="Grishin E.V."/>
            <person name="Usherwood P.N.R."/>
            <person name="Barnard E.A."/>
        </authorList>
    </citation>
    <scope>NUCLEOTIDE SEQUENCE [MRNA] (ISOFORM 8)</scope>
    <scope>SUBCELLULAR LOCATION</scope>
    <source>
        <tissue evidence="22">Brain</tissue>
    </source>
</reference>
<reference evidence="19" key="3">
    <citation type="journal article" date="2006" name="Mol. Pharmacol.">
        <title>Revisiting the postulated 'unitary glutamate receptor': electrophysiological and pharmacological analysis in two heterologous expression systems fails to detect evidence for its existence.</title>
        <authorList>
            <person name="Schmidt C."/>
            <person name="Werner M."/>
            <person name="Hollmann M."/>
        </authorList>
    </citation>
    <scope>NUCLEOTIDE SEQUENCE [MRNA] (ISOFORM 7)</scope>
    <scope>FUNCTION</scope>
    <scope>TRANSPORTER ACTIVITY</scope>
    <scope>SUBCELLULAR LOCATION</scope>
    <scope>SUBUNIT</scope>
</reference>
<reference evidence="20" key="4">
    <citation type="journal article" date="2009" name="Mol. Cell. Neurosci.">
        <title>Molecular and functional characterization of Xenopus laevis N-methyl-d-aspartate receptors.</title>
        <authorList>
            <person name="Schmidt C."/>
            <person name="Hollmann M."/>
        </authorList>
    </citation>
    <scope>NUCLEOTIDE SEQUENCE [MRNA] (ISOFORMS 2; 3; 4 AND 5)</scope>
    <scope>FUNCTION</scope>
    <scope>TRANSPORTER ACTIVITY</scope>
    <scope>ACTIVITY REGULATION</scope>
    <scope>SUBCELLULAR LOCATION</scope>
    <scope>SUBUNIT</scope>
    <source>
        <tissue evidence="20">Brain</tissue>
    </source>
</reference>
<reference evidence="23" key="5">
    <citation type="journal article" date="2016" name="Nature">
        <title>Genome evolution in the allotetraploid frog Xenopus laevis.</title>
        <authorList>
            <person name="Session A.M."/>
            <person name="Uno Y."/>
            <person name="Kwon T."/>
            <person name="Chapman J.A."/>
            <person name="Toyoda A."/>
            <person name="Takahashi S."/>
            <person name="Fukui A."/>
            <person name="Hikosaka A."/>
            <person name="Suzuki A."/>
            <person name="Kondo M."/>
            <person name="van Heeringen S.J."/>
            <person name="Quigley I."/>
            <person name="Heinz S."/>
            <person name="Ogino H."/>
            <person name="Ochi H."/>
            <person name="Hellsten U."/>
            <person name="Lyons J.B."/>
            <person name="Simakov O."/>
            <person name="Putnam N."/>
            <person name="Stites J."/>
            <person name="Kuroki Y."/>
            <person name="Tanaka T."/>
            <person name="Michiue T."/>
            <person name="Watanabe M."/>
            <person name="Bogdanovic O."/>
            <person name="Lister R."/>
            <person name="Georgiou G."/>
            <person name="Paranjpe S.S."/>
            <person name="van Kruijsbergen I."/>
            <person name="Shu S."/>
            <person name="Carlson J."/>
            <person name="Kinoshita T."/>
            <person name="Ohta Y."/>
            <person name="Mawaribuchi S."/>
            <person name="Jenkins J."/>
            <person name="Grimwood J."/>
            <person name="Schmutz J."/>
            <person name="Mitros T."/>
            <person name="Mozaffari S.V."/>
            <person name="Suzuki Y."/>
            <person name="Haramoto Y."/>
            <person name="Yamamoto T.S."/>
            <person name="Takagi C."/>
            <person name="Heald R."/>
            <person name="Miller K."/>
            <person name="Haudenschild C."/>
            <person name="Kitzman J."/>
            <person name="Nakayama T."/>
            <person name="Izutsu Y."/>
            <person name="Robert J."/>
            <person name="Fortriede J."/>
            <person name="Burns K."/>
            <person name="Lotay V."/>
            <person name="Karimi K."/>
            <person name="Yasuoka Y."/>
            <person name="Dichmann D.S."/>
            <person name="Flajnik M.F."/>
            <person name="Houston D.W."/>
            <person name="Shendure J."/>
            <person name="DuPasquier L."/>
            <person name="Vize P.D."/>
            <person name="Zorn A.M."/>
            <person name="Ito M."/>
            <person name="Marcotte E.M."/>
            <person name="Wallingford J.B."/>
            <person name="Ito Y."/>
            <person name="Asashima M."/>
            <person name="Ueno N."/>
            <person name="Matsuda Y."/>
            <person name="Veenstra G.J."/>
            <person name="Fujiyama A."/>
            <person name="Harland R.M."/>
            <person name="Taira M."/>
            <person name="Rokhsar D.S."/>
        </authorList>
    </citation>
    <scope>NUCLEOTIDE SEQUENCE [LARGE SCALE GENOMIC DNA]</scope>
    <source>
        <strain evidence="23">J</strain>
    </source>
</reference>
<reference evidence="25 26 27" key="6">
    <citation type="journal article" date="2011" name="Nature">
        <title>Subunit arrangement and phenylethanolamine binding in GluN1/GluN2B NMDA receptors.</title>
        <authorList>
            <person name="Karakas E."/>
            <person name="Simorowski N."/>
            <person name="Furukawa H."/>
        </authorList>
    </citation>
    <scope>X-RAY CRYSTALLOGRAPHY (2.00 ANGSTROMS) OF 23-405 IN COMPLEX WITH GRIN2B</scope>
    <scope>FUNCTION</scope>
    <scope>TRANSPORTER ACTIVITY</scope>
    <scope>SUBCELLULAR LOCATION</scope>
    <scope>SUBUNIT</scope>
    <scope>GLYCOSYLATION AT ASN-276; ASN-300 AND ASN-368</scope>
    <scope>DISULFIDE BONDS</scope>
    <scope>DOMAIN</scope>
</reference>
<reference evidence="28 29" key="7">
    <citation type="journal article" date="2014" name="Nature">
        <title>NMDA receptor structures reveal subunit arrangement and pore architecture.</title>
        <authorList>
            <person name="Lee C.H."/>
            <person name="Lu W."/>
            <person name="Michel J.C."/>
            <person name="Goehring A."/>
            <person name="Du J."/>
            <person name="Song X."/>
            <person name="Gouaux E."/>
        </authorList>
    </citation>
    <scope>X-RAY CRYSTALLOGRAPHY (3.59 ANGSTROMS) OF 22-836 IN COMPLEX WITH GRIN2B</scope>
    <scope>FUNCTION</scope>
    <scope>SUBCELLULAR LOCATION</scope>
    <scope>SUBUNIT</scope>
    <scope>DOMAIN</scope>
    <scope>GLYCOSYLATION AT ASN-61; ASN-203 AND ASN-276</scope>
    <scope>DISULFIDE BONDS</scope>
</reference>
<reference evidence="34 35 36 37 38 39 40 41" key="8">
    <citation type="journal article" date="2016" name="Cell">
        <title>Mechanism of NMDA Receptor Inhibition and Activation.</title>
        <authorList>
            <person name="Zhu S."/>
            <person name="Stein R.A."/>
            <person name="Yoshioka C."/>
            <person name="Lee C.H."/>
            <person name="Goehring A."/>
            <person name="Mchaourab H.S."/>
            <person name="Gouaux E."/>
        </authorList>
    </citation>
    <scope>STRUCTURE BY ELECTRON MICROSCOPY (7.00 ANGSTROMS) OF 23-836 IN COMPLEX WITH GRIN2B</scope>
    <scope>TOPOLOGY</scope>
    <scope>SUBUNIT</scope>
    <scope>DOMAIN</scope>
</reference>
<reference evidence="31 32 33" key="9">
    <citation type="journal article" date="2016" name="Mol. Pharmacol.">
        <title>A Novel Binding Mode Reveals Two Distinct Classes of NMDA Receptor GluN2B-selective Antagonists.</title>
        <authorList>
            <person name="Stroebel D."/>
            <person name="Buhl D.L."/>
            <person name="Knafels J.D."/>
            <person name="Chanda P.K."/>
            <person name="Green M."/>
            <person name="Sciabola S."/>
            <person name="Mony L."/>
            <person name="Paoletti P."/>
            <person name="Pandit J."/>
        </authorList>
    </citation>
    <scope>X-RAY CRYSTALLOGRAPHY (2.76 ANGSTROMS) OF 23-408 IN COMPLEX WITH GRIN2B</scope>
    <scope>FUNCTION</scope>
    <scope>SUBCELLULAR LOCATION</scope>
    <scope>SUBUNIT</scope>
    <scope>DISULFIDE BONDS</scope>
</reference>
<reference evidence="30" key="10">
    <citation type="journal article" date="2016" name="Nature">
        <title>Activation of NMDA receptors and the mechanism of inhibition by ifenprodil.</title>
        <authorList>
            <person name="Tajima N."/>
            <person name="Karakas E."/>
            <person name="Grant T."/>
            <person name="Simorowski N."/>
            <person name="Diaz-Avalos R."/>
            <person name="Grigorieff N."/>
            <person name="Furukawa H."/>
        </authorList>
    </citation>
    <scope>X-RAY CRYSTALLOGRAPHY (2.90 ANGSTROMS) OF 23-405 IN COMPLEX WITH GRIN2B</scope>
    <scope>FUNCTION</scope>
    <scope>SUBCELLULAR LOCATION</scope>
    <scope>SUBUNIT</scope>
    <scope>DISULFIDE BONDS</scope>
    <scope>DOMAIN</scope>
</reference>
<reference evidence="42 43 44 45" key="11">
    <citation type="journal article" date="2016" name="Neuron">
        <title>Molecular Basis for Subtype Specificity and High-Affinity Zinc Inhibition in the GluN1-GluN2A NMDA Receptor Amino-Terminal Domain.</title>
        <authorList>
            <person name="Romero-Hernandez A."/>
            <person name="Simorowski N."/>
            <person name="Karakas E."/>
            <person name="Furukawa H."/>
        </authorList>
    </citation>
    <scope>X-RAY CRYSTALLOGRAPHY (2.70 ANGSTROMS) OF 24-408 IN COMPLEX WITH GRIN2A</scope>
    <scope>FUNCTION</scope>
    <scope>ACTIVITY REGULATION</scope>
    <scope>SUBCELLULAR LOCATION</scope>
    <scope>SUBUNIT</scope>
    <scope>GLYCOSYLATION AT ASN-203 AND ASN-300</scope>
    <scope>DISULFIDE BONDS</scope>
</reference>
<reference evidence="46 47" key="12">
    <citation type="journal article" date="2017" name="Science">
        <title>Cryo-EM structures of the triheteromeric NMDA receptor and its allosteric modulation.</title>
        <authorList>
            <person name="Lu W."/>
            <person name="Du J."/>
            <person name="Goehring A."/>
            <person name="Gouaux E."/>
        </authorList>
    </citation>
    <scope>STRUCTURE BY ELECTRON MICROSCOPY (4.50 ANGSTROMS) OF 1-836 IN COMPLEX WITH GRIN2A AND GRIN2B</scope>
    <scope>SUBCELLULAR LOCATION</scope>
    <scope>FUNCTION</scope>
    <scope>SUBUNIT</scope>
    <scope>DOMAIN</scope>
    <scope>GLYCOSYLATION AT ASN-61; ASN-203 AND ASN-276</scope>
    <scope>DISULFIDE BONDS</scope>
</reference>
<gene>
    <name evidence="24" type="primary">grin1</name>
</gene>
<proteinExistence type="evidence at protein level"/>
<feature type="signal peptide" evidence="4">
    <location>
        <begin position="1"/>
        <end position="20"/>
    </location>
</feature>
<feature type="chain" id="PRO_0000442209" description="Glutamate receptor ionotropic, NMDA 1" evidence="4">
    <location>
        <begin position="21"/>
        <end position="903"/>
    </location>
</feature>
<feature type="topological domain" description="Extracellular" evidence="16">
    <location>
        <begin position="21"/>
        <end position="557"/>
    </location>
</feature>
<feature type="transmembrane region" description="Helical" evidence="9">
    <location>
        <begin position="558"/>
        <end position="578"/>
    </location>
</feature>
<feature type="topological domain" description="Cytoplasmic" evidence="16">
    <location>
        <begin position="579"/>
        <end position="600"/>
    </location>
</feature>
<feature type="intramembrane region" description="Discontinuously helical" evidence="9">
    <location>
        <begin position="601"/>
        <end position="622"/>
    </location>
</feature>
<feature type="topological domain" description="Cytoplasmic" evidence="16">
    <location>
        <begin position="623"/>
        <end position="628"/>
    </location>
</feature>
<feature type="transmembrane region" description="Helical" evidence="9">
    <location>
        <begin position="629"/>
        <end position="645"/>
    </location>
</feature>
<feature type="topological domain" description="Extracellular" evidence="16">
    <location>
        <begin position="646"/>
        <end position="810"/>
    </location>
</feature>
<feature type="transmembrane region" description="Helical" evidence="9">
    <location>
        <begin position="811"/>
        <end position="831"/>
    </location>
</feature>
<feature type="topological domain" description="Cytoplasmic" evidence="16">
    <location>
        <begin position="832"/>
        <end position="903"/>
    </location>
</feature>
<feature type="region of interest" description="Pore-forming" evidence="17">
    <location>
        <begin position="601"/>
        <end position="620"/>
    </location>
</feature>
<feature type="binding site" evidence="2">
    <location>
        <position position="514"/>
    </location>
    <ligand>
        <name>glycine</name>
        <dbReference type="ChEBI" id="CHEBI:57305"/>
    </ligand>
</feature>
<feature type="binding site" evidence="2">
    <location>
        <position position="516"/>
    </location>
    <ligand>
        <name>glycine</name>
        <dbReference type="ChEBI" id="CHEBI:57305"/>
    </ligand>
</feature>
<feature type="binding site" evidence="2">
    <location>
        <position position="521"/>
    </location>
    <ligand>
        <name>glycine</name>
        <dbReference type="ChEBI" id="CHEBI:57305"/>
    </ligand>
</feature>
<feature type="binding site" evidence="2">
    <location>
        <position position="686"/>
    </location>
    <ligand>
        <name>glycine</name>
        <dbReference type="ChEBI" id="CHEBI:57305"/>
    </ligand>
</feature>
<feature type="binding site" evidence="2">
    <location>
        <position position="730"/>
    </location>
    <ligand>
        <name>glycine</name>
        <dbReference type="ChEBI" id="CHEBI:57305"/>
    </ligand>
</feature>
<feature type="glycosylation site" description="N-linked (GlcNAc...) asparagine" evidence="9 14 28 46">
    <location>
        <position position="61"/>
    </location>
</feature>
<feature type="glycosylation site" description="N-linked (GlcNAc...) asparagine" evidence="9 13 14 28 43 46 47">
    <location>
        <position position="203"/>
    </location>
</feature>
<feature type="glycosylation site" description="N-linked (GlcNAc...) asparagine" evidence="8 9 14 25 26 27 28 46 47">
    <location>
        <position position="276"/>
    </location>
</feature>
<feature type="glycosylation site" description="N-linked (GlcNAc...) asparagine" evidence="8 13 25 43">
    <location>
        <position position="300"/>
    </location>
</feature>
<feature type="glycosylation site" description="N-linked (GlcNAc...) asparagine" evidence="5">
    <location>
        <position position="350"/>
    </location>
</feature>
<feature type="glycosylation site" description="N-linked (GlcNAc...) asparagine" evidence="8 25 26 27">
    <location>
        <position position="368"/>
    </location>
</feature>
<feature type="glycosylation site" description="N-linked (GlcNAc...) asparagine" evidence="5">
    <location>
        <position position="440"/>
    </location>
</feature>
<feature type="glycosylation site" description="N-linked (GlcNAc...) asparagine" evidence="5">
    <location>
        <position position="469"/>
    </location>
</feature>
<feature type="glycosylation site" description="N-linked (GlcNAc...) asparagine" evidence="5">
    <location>
        <position position="489"/>
    </location>
</feature>
<feature type="glycosylation site" description="N-linked (GlcNAc...) asparagine" evidence="5">
    <location>
        <position position="769"/>
    </location>
</feature>
<feature type="disulfide bond" evidence="14 46 47">
    <location>
        <begin position="79"/>
        <end position="308"/>
    </location>
</feature>
<feature type="disulfide bond" evidence="14 46 47">
    <location>
        <begin position="420"/>
        <end position="452"/>
    </location>
</feature>
<feature type="disulfide bond" evidence="14 46 47">
    <location>
        <begin position="436"/>
        <end position="453"/>
    </location>
</feature>
<feature type="disulfide bond" evidence="14 46 47">
    <location>
        <begin position="742"/>
        <end position="796"/>
    </location>
</feature>
<feature type="splice variant" id="VSP_059206" description="In isoform 8.">
    <original>EKES</original>
    <variation>GKESKSKKRNYENLDQLSYDNKRGP</variation>
    <location>
        <begin position="186"/>
        <end position="189"/>
    </location>
</feature>
<feature type="splice variant" id="VSP_059207" description="In isoform 3, isoform 5 and isoform 6.">
    <original>S</original>
    <variation>SKSKKRNYENLDQLSYDNKRGP</variation>
    <location>
        <position position="189"/>
    </location>
</feature>
<feature type="splice variant" id="VSP_059208" description="In isoform 6, isoform 7 and isoform 8.">
    <original>DRKSGRAEPDPKKKASFRSITSTLASSFKRRRSSKDTVNV</original>
    <variation>QYPPTDITGQLNLSDPSVST</variation>
    <location>
        <begin position="862"/>
        <end position="901"/>
    </location>
</feature>
<feature type="splice variant" id="VSP_059209" description="In isoform 4 and isoform 5.">
    <original>DRKSG</original>
    <variation>PGNIK</variation>
    <location>
        <begin position="862"/>
        <end position="866"/>
    </location>
</feature>
<feature type="splice variant" id="VSP_059210" description="In isoform 4 and isoform 5.">
    <location>
        <begin position="867"/>
        <end position="903"/>
    </location>
</feature>
<feature type="splice variant" id="VSP_059211" description="In isoform 2 and isoform 3.">
    <original>VNV</original>
    <variation>QYPPTDITGQLNLSDPSVST</variation>
    <location>
        <begin position="899"/>
        <end position="901"/>
    </location>
</feature>
<feature type="strand" evidence="48">
    <location>
        <begin position="25"/>
        <end position="35"/>
    </location>
</feature>
<feature type="helix" evidence="48">
    <location>
        <begin position="36"/>
        <end position="52"/>
    </location>
</feature>
<feature type="strand" evidence="48">
    <location>
        <begin position="56"/>
        <end position="66"/>
    </location>
</feature>
<feature type="helix" evidence="48">
    <location>
        <begin position="71"/>
        <end position="81"/>
    </location>
</feature>
<feature type="helix" evidence="48">
    <location>
        <begin position="83"/>
        <end position="85"/>
    </location>
</feature>
<feature type="strand" evidence="48">
    <location>
        <begin position="87"/>
        <end position="92"/>
    </location>
</feature>
<feature type="strand" evidence="50">
    <location>
        <begin position="96"/>
        <end position="100"/>
    </location>
</feature>
<feature type="turn" evidence="50">
    <location>
        <begin position="101"/>
        <end position="104"/>
    </location>
</feature>
<feature type="helix" evidence="48">
    <location>
        <begin position="105"/>
        <end position="112"/>
    </location>
</feature>
<feature type="turn" evidence="48">
    <location>
        <begin position="113"/>
        <end position="115"/>
    </location>
</feature>
<feature type="strand" evidence="48">
    <location>
        <begin position="118"/>
        <end position="122"/>
    </location>
</feature>
<feature type="helix" evidence="48">
    <location>
        <begin position="126"/>
        <end position="129"/>
    </location>
</feature>
<feature type="strand" evidence="48">
    <location>
        <begin position="131"/>
        <end position="133"/>
    </location>
</feature>
<feature type="strand" evidence="48">
    <location>
        <begin position="137"/>
        <end position="141"/>
    </location>
</feature>
<feature type="helix" evidence="48">
    <location>
        <begin position="144"/>
        <end position="146"/>
    </location>
</feature>
<feature type="helix" evidence="48">
    <location>
        <begin position="147"/>
        <end position="157"/>
    </location>
</feature>
<feature type="strand" evidence="48">
    <location>
        <begin position="162"/>
        <end position="170"/>
    </location>
</feature>
<feature type="helix" evidence="48">
    <location>
        <begin position="171"/>
        <end position="184"/>
    </location>
</feature>
<feature type="helix" evidence="48">
    <location>
        <begin position="186"/>
        <end position="190"/>
    </location>
</feature>
<feature type="strand" evidence="48">
    <location>
        <begin position="191"/>
        <end position="197"/>
    </location>
</feature>
<feature type="helix" evidence="48">
    <location>
        <begin position="205"/>
        <end position="212"/>
    </location>
</feature>
<feature type="strand" evidence="52">
    <location>
        <begin position="213"/>
        <end position="215"/>
    </location>
</feature>
<feature type="strand" evidence="48">
    <location>
        <begin position="218"/>
        <end position="222"/>
    </location>
</feature>
<feature type="helix" evidence="48">
    <location>
        <begin position="225"/>
        <end position="237"/>
    </location>
</feature>
<feature type="strand" evidence="50">
    <location>
        <begin position="241"/>
        <end position="244"/>
    </location>
</feature>
<feature type="strand" evidence="48">
    <location>
        <begin position="246"/>
        <end position="248"/>
    </location>
</feature>
<feature type="helix" evidence="48">
    <location>
        <begin position="252"/>
        <end position="254"/>
    </location>
</feature>
<feature type="helix" evidence="48">
    <location>
        <begin position="256"/>
        <end position="259"/>
    </location>
</feature>
<feature type="strand" evidence="48">
    <location>
        <begin position="267"/>
        <end position="271"/>
    </location>
</feature>
<feature type="turn" evidence="48">
    <location>
        <begin position="272"/>
        <end position="275"/>
    </location>
</feature>
<feature type="helix" evidence="48">
    <location>
        <begin position="277"/>
        <end position="296"/>
    </location>
</feature>
<feature type="strand" evidence="48">
    <location>
        <begin position="298"/>
        <end position="300"/>
    </location>
</feature>
<feature type="strand" evidence="51">
    <location>
        <begin position="306"/>
        <end position="308"/>
    </location>
</feature>
<feature type="helix" evidence="48">
    <location>
        <begin position="318"/>
        <end position="326"/>
    </location>
</feature>
<feature type="strand" evidence="48">
    <location>
        <begin position="330"/>
        <end position="333"/>
    </location>
</feature>
<feature type="strand" evidence="48">
    <location>
        <begin position="336"/>
        <end position="338"/>
    </location>
</feature>
<feature type="strand" evidence="51">
    <location>
        <begin position="344"/>
        <end position="348"/>
    </location>
</feature>
<feature type="strand" evidence="48">
    <location>
        <begin position="351"/>
        <end position="357"/>
    </location>
</feature>
<feature type="strand" evidence="48">
    <location>
        <begin position="360"/>
        <end position="367"/>
    </location>
</feature>
<feature type="strand" evidence="48">
    <location>
        <begin position="369"/>
        <end position="374"/>
    </location>
</feature>
<feature type="strand" evidence="49">
    <location>
        <begin position="378"/>
        <end position="380"/>
    </location>
</feature>
<feature type="strand" evidence="49">
    <location>
        <begin position="382"/>
        <end position="384"/>
    </location>
</feature>
<dbReference type="EMBL" id="X94081">
    <property type="protein sequence ID" value="CAA63825.1"/>
    <property type="molecule type" value="mRNA"/>
</dbReference>
<dbReference type="EMBL" id="X94156">
    <property type="protein sequence ID" value="CAA63871.1"/>
    <property type="molecule type" value="mRNA"/>
</dbReference>
<dbReference type="EMBL" id="DQ066918">
    <property type="protein sequence ID" value="AAY63890.1"/>
    <property type="molecule type" value="mRNA"/>
</dbReference>
<dbReference type="EMBL" id="FJ571597">
    <property type="protein sequence ID" value="ACN87989.1"/>
    <property type="molecule type" value="mRNA"/>
</dbReference>
<dbReference type="EMBL" id="FJ571598">
    <property type="protein sequence ID" value="ACN87990.1"/>
    <property type="molecule type" value="mRNA"/>
</dbReference>
<dbReference type="EMBL" id="FJ571599">
    <property type="protein sequence ID" value="ACN87991.1"/>
    <property type="molecule type" value="mRNA"/>
</dbReference>
<dbReference type="EMBL" id="FJ571600">
    <property type="protein sequence ID" value="ACN87992.1"/>
    <property type="molecule type" value="mRNA"/>
</dbReference>
<dbReference type="EMBL" id="FJ571601">
    <property type="protein sequence ID" value="ACN87993.1"/>
    <property type="molecule type" value="mRNA"/>
</dbReference>
<dbReference type="EMBL" id="CM004480">
    <property type="protein sequence ID" value="OCT66859.1"/>
    <property type="molecule type" value="Genomic_DNA"/>
</dbReference>
<dbReference type="RefSeq" id="NP_001081615.1">
    <molecule id="A0A1L8F5J9-8"/>
    <property type="nucleotide sequence ID" value="NM_001088146.1"/>
</dbReference>
<dbReference type="RefSeq" id="NP_001081616.1">
    <molecule id="A0A1L8F5J9-7"/>
    <property type="nucleotide sequence ID" value="NM_001088147.1"/>
</dbReference>
<dbReference type="PDB" id="3QEK">
    <property type="method" value="X-ray"/>
    <property type="resolution" value="2.00 A"/>
    <property type="chains" value="A/B=23-384"/>
</dbReference>
<dbReference type="PDB" id="3QEL">
    <property type="method" value="X-ray"/>
    <property type="resolution" value="2.60 A"/>
    <property type="chains" value="A/C=23-384"/>
</dbReference>
<dbReference type="PDB" id="3QEM">
    <property type="method" value="X-ray"/>
    <property type="resolution" value="3.00 A"/>
    <property type="chains" value="A/C=23-384"/>
</dbReference>
<dbReference type="PDB" id="4TLL">
    <property type="method" value="X-ray"/>
    <property type="resolution" value="3.59 A"/>
    <property type="chains" value="A/C=22-836"/>
</dbReference>
<dbReference type="PDB" id="4TLM">
    <property type="method" value="X-ray"/>
    <property type="resolution" value="3.77 A"/>
    <property type="chains" value="A/C=22-836"/>
</dbReference>
<dbReference type="PDB" id="5B3J">
    <property type="method" value="X-ray"/>
    <property type="resolution" value="2.90 A"/>
    <property type="chains" value="A/B=23-384"/>
</dbReference>
<dbReference type="PDB" id="5EWJ">
    <property type="method" value="X-ray"/>
    <property type="resolution" value="2.77 A"/>
    <property type="chains" value="A/C=23-387"/>
</dbReference>
<dbReference type="PDB" id="5EWL">
    <property type="method" value="X-ray"/>
    <property type="resolution" value="2.98 A"/>
    <property type="chains" value="A/C=23-387"/>
</dbReference>
<dbReference type="PDB" id="5EWM">
    <property type="method" value="X-ray"/>
    <property type="resolution" value="2.76 A"/>
    <property type="chains" value="A/C=23-387"/>
</dbReference>
<dbReference type="PDB" id="5IOU">
    <property type="method" value="EM"/>
    <property type="resolution" value="7.00 A"/>
    <property type="chains" value="A/C=23-836"/>
</dbReference>
<dbReference type="PDB" id="5IOV">
    <property type="method" value="EM"/>
    <property type="resolution" value="7.50 A"/>
    <property type="chains" value="A/C=23-836"/>
</dbReference>
<dbReference type="PDB" id="5IPQ">
    <property type="method" value="EM"/>
    <property type="resolution" value="13.50 A"/>
    <property type="chains" value="A/C=23-836"/>
</dbReference>
<dbReference type="PDB" id="5IPR">
    <property type="method" value="EM"/>
    <property type="resolution" value="14.10 A"/>
    <property type="chains" value="A/C=23-836"/>
</dbReference>
<dbReference type="PDB" id="5IPS">
    <property type="method" value="EM"/>
    <property type="resolution" value="13.50 A"/>
    <property type="chains" value="A/C=23-836"/>
</dbReference>
<dbReference type="PDB" id="5IPT">
    <property type="method" value="EM"/>
    <property type="resolution" value="14.10 A"/>
    <property type="chains" value="A/C=23-836"/>
</dbReference>
<dbReference type="PDB" id="5IPU">
    <property type="method" value="EM"/>
    <property type="resolution" value="15.40 A"/>
    <property type="chains" value="A/C=23-836"/>
</dbReference>
<dbReference type="PDB" id="5IPV">
    <property type="method" value="EM"/>
    <property type="resolution" value="9.25 A"/>
    <property type="chains" value="A/C=23-836"/>
</dbReference>
<dbReference type="PDB" id="5TPW">
    <property type="method" value="X-ray"/>
    <property type="resolution" value="2.91 A"/>
    <property type="chains" value="A=24-387"/>
</dbReference>
<dbReference type="PDB" id="5TPZ">
    <property type="method" value="X-ray"/>
    <property type="resolution" value="3.10 A"/>
    <property type="chains" value="A=23-384"/>
</dbReference>
<dbReference type="PDB" id="5TQ0">
    <property type="method" value="X-ray"/>
    <property type="resolution" value="2.70 A"/>
    <property type="chains" value="A=24-387"/>
</dbReference>
<dbReference type="PDB" id="5TQ2">
    <property type="method" value="X-ray"/>
    <property type="resolution" value="3.29 A"/>
    <property type="chains" value="A=24-387"/>
</dbReference>
<dbReference type="PDB" id="5UN1">
    <property type="method" value="X-ray"/>
    <property type="resolution" value="3.60 A"/>
    <property type="chains" value="A/C/E/G=394-836"/>
</dbReference>
<dbReference type="PDB" id="5UOW">
    <property type="method" value="EM"/>
    <property type="resolution" value="4.50 A"/>
    <property type="chains" value="A/C=23-836"/>
</dbReference>
<dbReference type="PDB" id="5UP2">
    <property type="method" value="EM"/>
    <property type="resolution" value="6.00 A"/>
    <property type="chains" value="A/C=1-836"/>
</dbReference>
<dbReference type="PDB" id="6E7R">
    <property type="method" value="X-ray"/>
    <property type="resolution" value="2.10 A"/>
    <property type="chains" value="A/C=23-386"/>
</dbReference>
<dbReference type="PDB" id="6E7S">
    <property type="method" value="X-ray"/>
    <property type="resolution" value="2.72 A"/>
    <property type="chains" value="A/C=23-386"/>
</dbReference>
<dbReference type="PDB" id="6E7T">
    <property type="method" value="X-ray"/>
    <property type="resolution" value="2.31 A"/>
    <property type="chains" value="A/C=23-386"/>
</dbReference>
<dbReference type="PDB" id="6E7U">
    <property type="method" value="X-ray"/>
    <property type="resolution" value="2.27 A"/>
    <property type="chains" value="A/C=23-386"/>
</dbReference>
<dbReference type="PDB" id="6E7V">
    <property type="method" value="X-ray"/>
    <property type="resolution" value="2.60 A"/>
    <property type="chains" value="A/C=23-386"/>
</dbReference>
<dbReference type="PDB" id="6E7W">
    <property type="method" value="X-ray"/>
    <property type="resolution" value="2.67 A"/>
    <property type="chains" value="A/C=23-386"/>
</dbReference>
<dbReference type="PDB" id="6E7X">
    <property type="method" value="X-ray"/>
    <property type="resolution" value="2.58 A"/>
    <property type="chains" value="A/C=23-386"/>
</dbReference>
<dbReference type="PDB" id="7TE6">
    <property type="method" value="X-ray"/>
    <property type="resolution" value="4.55 A"/>
    <property type="chains" value="A/E=23-384"/>
</dbReference>
<dbReference type="PDBsum" id="3QEK"/>
<dbReference type="PDBsum" id="3QEL"/>
<dbReference type="PDBsum" id="3QEM"/>
<dbReference type="PDBsum" id="4TLL"/>
<dbReference type="PDBsum" id="4TLM"/>
<dbReference type="PDBsum" id="5B3J"/>
<dbReference type="PDBsum" id="5EWJ"/>
<dbReference type="PDBsum" id="5EWL"/>
<dbReference type="PDBsum" id="5EWM"/>
<dbReference type="PDBsum" id="5IOU"/>
<dbReference type="PDBsum" id="5IOV"/>
<dbReference type="PDBsum" id="5IPQ"/>
<dbReference type="PDBsum" id="5IPR"/>
<dbReference type="PDBsum" id="5IPS"/>
<dbReference type="PDBsum" id="5IPT"/>
<dbReference type="PDBsum" id="5IPU"/>
<dbReference type="PDBsum" id="5IPV"/>
<dbReference type="PDBsum" id="5TPW"/>
<dbReference type="PDBsum" id="5TPZ"/>
<dbReference type="PDBsum" id="5TQ0"/>
<dbReference type="PDBsum" id="5TQ2"/>
<dbReference type="PDBsum" id="5UN1"/>
<dbReference type="PDBsum" id="5UOW"/>
<dbReference type="PDBsum" id="5UP2"/>
<dbReference type="PDBsum" id="6E7R"/>
<dbReference type="PDBsum" id="6E7S"/>
<dbReference type="PDBsum" id="6E7T"/>
<dbReference type="PDBsum" id="6E7U"/>
<dbReference type="PDBsum" id="6E7V"/>
<dbReference type="PDBsum" id="6E7W"/>
<dbReference type="PDBsum" id="6E7X"/>
<dbReference type="PDBsum" id="7TE6"/>
<dbReference type="EMDB" id="EMD-8097"/>
<dbReference type="EMDB" id="EMD-8098"/>
<dbReference type="EMDB" id="EMD-8101"/>
<dbReference type="EMDB" id="EMD-8102"/>
<dbReference type="EMDB" id="EMD-8103"/>
<dbReference type="EMDB" id="EMD-8104"/>
<dbReference type="EMDB" id="EMD-8105"/>
<dbReference type="EMDB" id="EMD-8106"/>
<dbReference type="EMDB" id="EMD-8579"/>
<dbReference type="EMDB" id="EMD-8581"/>
<dbReference type="SMR" id="A0A1L8F5J9"/>
<dbReference type="DIP" id="DIP-59169N"/>
<dbReference type="DIP" id="DIP-61036N"/>
<dbReference type="IntAct" id="A0A1L8F5J9">
    <property type="interactions" value="2"/>
</dbReference>
<dbReference type="STRING" id="8355.A0A1L8F5J9"/>
<dbReference type="TCDB" id="1.A.10.1.12">
    <property type="family name" value="the glutamate-gated ion channel (gic) family of neurotransmitter receptors"/>
</dbReference>
<dbReference type="GlyCosmos" id="A0A1L8F5J9">
    <property type="glycosylation" value="10 sites, No reported glycans"/>
</dbReference>
<dbReference type="iPTMnet" id="A0A1L8F5J9"/>
<dbReference type="PaxDb" id="8355-A0A1L8F5J9"/>
<dbReference type="ABCD" id="A0A1L8F5J9">
    <property type="antibodies" value="1 sequenced antibody"/>
</dbReference>
<dbReference type="GeneID" id="397953"/>
<dbReference type="KEGG" id="xla:397953"/>
<dbReference type="AGR" id="Xenbase:XB-GENE-866327"/>
<dbReference type="CTD" id="397953"/>
<dbReference type="Xenbase" id="XB-GENE-866327">
    <property type="gene designation" value="grin1.L"/>
</dbReference>
<dbReference type="OrthoDB" id="5984008at2759"/>
<dbReference type="EvolutionaryTrace" id="A0A1L8F5J9"/>
<dbReference type="Proteomes" id="UP000186698">
    <property type="component" value="Chromosome 8L"/>
</dbReference>
<dbReference type="Proteomes" id="UP000694892">
    <property type="component" value="Chromosome 8L"/>
</dbReference>
<dbReference type="Bgee" id="397953">
    <property type="expression patterns" value="Expressed in brain and 10 other cell types or tissues"/>
</dbReference>
<dbReference type="GO" id="GO:0043005">
    <property type="term" value="C:neuron projection"/>
    <property type="evidence" value="ECO:0000318"/>
    <property type="project" value="GO_Central"/>
</dbReference>
<dbReference type="GO" id="GO:0017146">
    <property type="term" value="C:NMDA selective glutamate receptor complex"/>
    <property type="evidence" value="ECO:0000314"/>
    <property type="project" value="UniProtKB"/>
</dbReference>
<dbReference type="GO" id="GO:0005886">
    <property type="term" value="C:plasma membrane"/>
    <property type="evidence" value="ECO:0000314"/>
    <property type="project" value="UniProtKB"/>
</dbReference>
<dbReference type="GO" id="GO:0098839">
    <property type="term" value="C:postsynaptic density membrane"/>
    <property type="evidence" value="ECO:0000250"/>
    <property type="project" value="UniProtKB"/>
</dbReference>
<dbReference type="GO" id="GO:0045211">
    <property type="term" value="C:postsynaptic membrane"/>
    <property type="evidence" value="ECO:0000250"/>
    <property type="project" value="UniProtKB"/>
</dbReference>
<dbReference type="GO" id="GO:0045202">
    <property type="term" value="C:synapse"/>
    <property type="evidence" value="ECO:0000318"/>
    <property type="project" value="GO_Central"/>
</dbReference>
<dbReference type="GO" id="GO:0022849">
    <property type="term" value="F:glutamate-gated calcium ion channel activity"/>
    <property type="evidence" value="ECO:0000250"/>
    <property type="project" value="UniProtKB"/>
</dbReference>
<dbReference type="GO" id="GO:0015280">
    <property type="term" value="F:ligand-gated sodium channel activity"/>
    <property type="evidence" value="ECO:0000250"/>
    <property type="project" value="UniProtKB"/>
</dbReference>
<dbReference type="GO" id="GO:0046872">
    <property type="term" value="F:metal ion binding"/>
    <property type="evidence" value="ECO:0007669"/>
    <property type="project" value="UniProtKB-KW"/>
</dbReference>
<dbReference type="GO" id="GO:0004972">
    <property type="term" value="F:NMDA glutamate receptor activity"/>
    <property type="evidence" value="ECO:0000314"/>
    <property type="project" value="UniProtKB"/>
</dbReference>
<dbReference type="GO" id="GO:0038023">
    <property type="term" value="F:signaling receptor activity"/>
    <property type="evidence" value="ECO:0000318"/>
    <property type="project" value="GO_Central"/>
</dbReference>
<dbReference type="GO" id="GO:0070588">
    <property type="term" value="P:calcium ion transmembrane transport"/>
    <property type="evidence" value="ECO:0000314"/>
    <property type="project" value="UniProtKB"/>
</dbReference>
<dbReference type="GO" id="GO:0007268">
    <property type="term" value="P:chemical synaptic transmission"/>
    <property type="evidence" value="ECO:0000318"/>
    <property type="project" value="GO_Central"/>
</dbReference>
<dbReference type="GO" id="GO:0035235">
    <property type="term" value="P:ionotropic glutamate receptor signaling pathway"/>
    <property type="evidence" value="ECO:0000318"/>
    <property type="project" value="GO_Central"/>
</dbReference>
<dbReference type="GO" id="GO:0042391">
    <property type="term" value="P:regulation of membrane potential"/>
    <property type="evidence" value="ECO:0000318"/>
    <property type="project" value="GO_Central"/>
</dbReference>
<dbReference type="GO" id="GO:0048167">
    <property type="term" value="P:regulation of synaptic plasticity"/>
    <property type="evidence" value="ECO:0000250"/>
    <property type="project" value="UniProtKB"/>
</dbReference>
<dbReference type="GO" id="GO:0010043">
    <property type="term" value="P:response to zinc ion"/>
    <property type="evidence" value="ECO:0000314"/>
    <property type="project" value="UniProtKB"/>
</dbReference>
<dbReference type="GO" id="GO:0035725">
    <property type="term" value="P:sodium ion transmembrane transport"/>
    <property type="evidence" value="ECO:0000250"/>
    <property type="project" value="UniProtKB"/>
</dbReference>
<dbReference type="CDD" id="cd06379">
    <property type="entry name" value="PBP1_iGluR_NMDA_NR1"/>
    <property type="match status" value="1"/>
</dbReference>
<dbReference type="CDD" id="cd13719">
    <property type="entry name" value="PBP2_iGluR_NMDA_Nr1"/>
    <property type="match status" value="1"/>
</dbReference>
<dbReference type="FunFam" id="3.40.190.10:FF:000010">
    <property type="entry name" value="glutamate receptor ionotropic, NMDA 1 isoform X1"/>
    <property type="match status" value="1"/>
</dbReference>
<dbReference type="FunFam" id="3.40.50.2300:FF:000025">
    <property type="entry name" value="glutamate receptor ionotropic, NMDA 1 isoform X1"/>
    <property type="match status" value="1"/>
</dbReference>
<dbReference type="FunFam" id="3.40.190.10:FF:000012">
    <property type="entry name" value="glutamate receptor ionotropic, NMDA 1 isoform X2"/>
    <property type="match status" value="1"/>
</dbReference>
<dbReference type="FunFam" id="3.40.50.2300:FF:000053">
    <property type="entry name" value="glutamate receptor ionotropic, NMDA 1 isoform X2"/>
    <property type="match status" value="1"/>
</dbReference>
<dbReference type="FunFam" id="3.40.190.10:FF:000025">
    <property type="entry name" value="glutamate receptor ionotropic, NMDA 1 isoform X3"/>
    <property type="match status" value="1"/>
</dbReference>
<dbReference type="FunFam" id="1.10.287.70:FF:000087">
    <property type="entry name" value="glutamate receptor ionotropic, NMDA 1 isoform X4"/>
    <property type="match status" value="1"/>
</dbReference>
<dbReference type="Gene3D" id="3.40.50.2300">
    <property type="match status" value="2"/>
</dbReference>
<dbReference type="Gene3D" id="3.40.190.10">
    <property type="entry name" value="Periplasmic binding protein-like II"/>
    <property type="match status" value="4"/>
</dbReference>
<dbReference type="InterPro" id="IPR001828">
    <property type="entry name" value="ANF_lig-bd_rcpt"/>
</dbReference>
<dbReference type="InterPro" id="IPR019594">
    <property type="entry name" value="Glu/Gly-bd"/>
</dbReference>
<dbReference type="InterPro" id="IPR001508">
    <property type="entry name" value="Iono_Glu_rcpt_met"/>
</dbReference>
<dbReference type="InterPro" id="IPR015683">
    <property type="entry name" value="Ionotropic_Glu_rcpt"/>
</dbReference>
<dbReference type="InterPro" id="IPR001320">
    <property type="entry name" value="Iontro_rcpt_C"/>
</dbReference>
<dbReference type="InterPro" id="IPR049872">
    <property type="entry name" value="NMDA1-like_ligand-bd"/>
</dbReference>
<dbReference type="InterPro" id="IPR049873">
    <property type="entry name" value="NMDA1-like_N"/>
</dbReference>
<dbReference type="InterPro" id="IPR028082">
    <property type="entry name" value="Peripla_BP_I"/>
</dbReference>
<dbReference type="PANTHER" id="PTHR18966">
    <property type="entry name" value="IONOTROPIC GLUTAMATE RECEPTOR"/>
    <property type="match status" value="1"/>
</dbReference>
<dbReference type="Pfam" id="PF01094">
    <property type="entry name" value="ANF_receptor"/>
    <property type="match status" value="1"/>
</dbReference>
<dbReference type="Pfam" id="PF00060">
    <property type="entry name" value="Lig_chan"/>
    <property type="match status" value="1"/>
</dbReference>
<dbReference type="Pfam" id="PF10613">
    <property type="entry name" value="Lig_chan-Glu_bd"/>
    <property type="match status" value="1"/>
</dbReference>
<dbReference type="PRINTS" id="PR00177">
    <property type="entry name" value="NMDARECEPTOR"/>
</dbReference>
<dbReference type="SMART" id="SM00918">
    <property type="entry name" value="Lig_chan-Glu_bd"/>
    <property type="match status" value="1"/>
</dbReference>
<dbReference type="SMART" id="SM00079">
    <property type="entry name" value="PBPe"/>
    <property type="match status" value="1"/>
</dbReference>
<dbReference type="SUPFAM" id="SSF53822">
    <property type="entry name" value="Periplasmic binding protein-like I"/>
    <property type="match status" value="1"/>
</dbReference>
<dbReference type="SUPFAM" id="SSF53850">
    <property type="entry name" value="Periplasmic binding protein-like II"/>
    <property type="match status" value="1"/>
</dbReference>
<dbReference type="SUPFAM" id="SSF81324">
    <property type="entry name" value="Voltage-gated potassium channels"/>
    <property type="match status" value="1"/>
</dbReference>
<keyword id="KW-0002">3D-structure</keyword>
<keyword id="KW-0025">Alternative splicing</keyword>
<keyword id="KW-0106">Calcium</keyword>
<keyword id="KW-1003">Cell membrane</keyword>
<keyword id="KW-1015">Disulfide bond</keyword>
<keyword id="KW-0325">Glycoprotein</keyword>
<keyword id="KW-0407">Ion channel</keyword>
<keyword id="KW-0406">Ion transport</keyword>
<keyword id="KW-1071">Ligand-gated ion channel</keyword>
<keyword id="KW-0460">Magnesium</keyword>
<keyword id="KW-0472">Membrane</keyword>
<keyword id="KW-0479">Metal-binding</keyword>
<keyword id="KW-0628">Postsynaptic cell membrane</keyword>
<keyword id="KW-0675">Receptor</keyword>
<keyword id="KW-1185">Reference proteome</keyword>
<keyword id="KW-0732">Signal</keyword>
<keyword id="KW-0770">Synapse</keyword>
<keyword id="KW-0812">Transmembrane</keyword>
<keyword id="KW-1133">Transmembrane helix</keyword>
<keyword id="KW-0813">Transport</keyword>
<keyword id="KW-0862">Zinc</keyword>